<gene>
    <name type="primary">trxB</name>
    <name type="ordered locus">SE_0547</name>
</gene>
<evidence type="ECO:0000250" key="1"/>
<evidence type="ECO:0000250" key="2">
    <source>
        <dbReference type="UniProtKB" id="P0A9P4"/>
    </source>
</evidence>
<evidence type="ECO:0000305" key="3"/>
<accession>Q8CPY8</accession>
<organism>
    <name type="scientific">Staphylococcus epidermidis (strain ATCC 12228 / FDA PCI 1200)</name>
    <dbReference type="NCBI Taxonomy" id="176280"/>
    <lineage>
        <taxon>Bacteria</taxon>
        <taxon>Bacillati</taxon>
        <taxon>Bacillota</taxon>
        <taxon>Bacilli</taxon>
        <taxon>Bacillales</taxon>
        <taxon>Staphylococcaceae</taxon>
        <taxon>Staphylococcus</taxon>
    </lineage>
</organism>
<dbReference type="EC" id="1.8.1.9"/>
<dbReference type="EMBL" id="AE015929">
    <property type="protein sequence ID" value="AAO04144.1"/>
    <property type="molecule type" value="Genomic_DNA"/>
</dbReference>
<dbReference type="RefSeq" id="NP_764102.1">
    <property type="nucleotide sequence ID" value="NC_004461.1"/>
</dbReference>
<dbReference type="RefSeq" id="WP_002438914.1">
    <property type="nucleotide sequence ID" value="NZ_WBME01000030.1"/>
</dbReference>
<dbReference type="SMR" id="Q8CPY8"/>
<dbReference type="ChEMBL" id="CHEMBL2364152"/>
<dbReference type="GeneID" id="50019306"/>
<dbReference type="KEGG" id="sep:SE_0547"/>
<dbReference type="PATRIC" id="fig|176280.10.peg.518"/>
<dbReference type="eggNOG" id="COG0492">
    <property type="taxonomic scope" value="Bacteria"/>
</dbReference>
<dbReference type="HOGENOM" id="CLU_031864_5_1_9"/>
<dbReference type="OrthoDB" id="9806179at2"/>
<dbReference type="Proteomes" id="UP000001411">
    <property type="component" value="Chromosome"/>
</dbReference>
<dbReference type="GO" id="GO:0005737">
    <property type="term" value="C:cytoplasm"/>
    <property type="evidence" value="ECO:0007669"/>
    <property type="project" value="UniProtKB-SubCell"/>
</dbReference>
<dbReference type="GO" id="GO:0004791">
    <property type="term" value="F:thioredoxin-disulfide reductase (NADPH) activity"/>
    <property type="evidence" value="ECO:0007669"/>
    <property type="project" value="UniProtKB-EC"/>
</dbReference>
<dbReference type="GO" id="GO:0019430">
    <property type="term" value="P:removal of superoxide radicals"/>
    <property type="evidence" value="ECO:0007669"/>
    <property type="project" value="InterPro"/>
</dbReference>
<dbReference type="Gene3D" id="3.50.50.60">
    <property type="entry name" value="FAD/NAD(P)-binding domain"/>
    <property type="match status" value="2"/>
</dbReference>
<dbReference type="InterPro" id="IPR036188">
    <property type="entry name" value="FAD/NAD-bd_sf"/>
</dbReference>
<dbReference type="InterPro" id="IPR023753">
    <property type="entry name" value="FAD/NAD-binding_dom"/>
</dbReference>
<dbReference type="InterPro" id="IPR050097">
    <property type="entry name" value="Ferredoxin-NADP_redctase_2"/>
</dbReference>
<dbReference type="InterPro" id="IPR008255">
    <property type="entry name" value="Pyr_nucl-diS_OxRdtase_2_AS"/>
</dbReference>
<dbReference type="InterPro" id="IPR005982">
    <property type="entry name" value="Thioredox_Rdtase"/>
</dbReference>
<dbReference type="NCBIfam" id="TIGR01292">
    <property type="entry name" value="TRX_reduct"/>
    <property type="match status" value="1"/>
</dbReference>
<dbReference type="PANTHER" id="PTHR48105">
    <property type="entry name" value="THIOREDOXIN REDUCTASE 1-RELATED-RELATED"/>
    <property type="match status" value="1"/>
</dbReference>
<dbReference type="Pfam" id="PF07992">
    <property type="entry name" value="Pyr_redox_2"/>
    <property type="match status" value="1"/>
</dbReference>
<dbReference type="PRINTS" id="PR00368">
    <property type="entry name" value="FADPNR"/>
</dbReference>
<dbReference type="PRINTS" id="PR00469">
    <property type="entry name" value="PNDRDTASEII"/>
</dbReference>
<dbReference type="SUPFAM" id="SSF51905">
    <property type="entry name" value="FAD/NAD(P)-binding domain"/>
    <property type="match status" value="1"/>
</dbReference>
<dbReference type="PROSITE" id="PS00573">
    <property type="entry name" value="PYRIDINE_REDOX_2"/>
    <property type="match status" value="1"/>
</dbReference>
<name>TRXB_STAES</name>
<sequence length="310" mass="33544">MTEVDFDVAIIGAGPAGMTAAVYASRANLKTVMIERGMPGGQMANTEEVENFPGFEMITGPDLSTKMFEHAKKFGAEYQYGDIKSVEDKGDYKVINLGNKEITAHAVIISTGAEYKKIGVPGEQELGGRGVSYCAVCDGAFFKNKRLFVIGGGDSAVEEGTFLTKFADKVTIVHRRDELRAQNILQERAFKNDKVDFIWSHTLKTINEKDGKVGSVTLESTKDGAEQTYDADGVFIYIGMKPLTAPFKNLGITNDAGYIVTQDDMSTKVRGIFAAGDVRDKGLRQIVTATGDGSIAAQSAADYITELKDN</sequence>
<comment type="catalytic activity">
    <reaction>
        <text>[thioredoxin]-dithiol + NADP(+) = [thioredoxin]-disulfide + NADPH + H(+)</text>
        <dbReference type="Rhea" id="RHEA:20345"/>
        <dbReference type="Rhea" id="RHEA-COMP:10698"/>
        <dbReference type="Rhea" id="RHEA-COMP:10700"/>
        <dbReference type="ChEBI" id="CHEBI:15378"/>
        <dbReference type="ChEBI" id="CHEBI:29950"/>
        <dbReference type="ChEBI" id="CHEBI:50058"/>
        <dbReference type="ChEBI" id="CHEBI:57783"/>
        <dbReference type="ChEBI" id="CHEBI:58349"/>
        <dbReference type="EC" id="1.8.1.9"/>
    </reaction>
</comment>
<comment type="cofactor">
    <cofactor evidence="2">
        <name>FAD</name>
        <dbReference type="ChEBI" id="CHEBI:57692"/>
    </cofactor>
    <text evidence="2">Binds 1 FAD per subunit.</text>
</comment>
<comment type="subunit">
    <text evidence="2">Homodimer.</text>
</comment>
<comment type="subcellular location">
    <subcellularLocation>
        <location evidence="1">Cytoplasm</location>
    </subcellularLocation>
</comment>
<comment type="miscellaneous">
    <text>The active site is a redox-active disulfide bond.</text>
</comment>
<comment type="similarity">
    <text evidence="3">Belongs to the class-II pyridine nucleotide-disulfide oxidoreductase family.</text>
</comment>
<protein>
    <recommendedName>
        <fullName>Thioredoxin reductase</fullName>
        <shortName>TRXR</shortName>
        <ecNumber>1.8.1.9</ecNumber>
    </recommendedName>
</protein>
<keyword id="KW-0963">Cytoplasm</keyword>
<keyword id="KW-1015">Disulfide bond</keyword>
<keyword id="KW-0274">FAD</keyword>
<keyword id="KW-0285">Flavoprotein</keyword>
<keyword id="KW-0521">NADP</keyword>
<keyword id="KW-0560">Oxidoreductase</keyword>
<keyword id="KW-0676">Redox-active center</keyword>
<feature type="chain" id="PRO_0000166750" description="Thioredoxin reductase">
    <location>
        <begin position="1"/>
        <end position="310"/>
    </location>
</feature>
<feature type="binding site" evidence="2">
    <location>
        <begin position="35"/>
        <end position="42"/>
    </location>
    <ligand>
        <name>FAD</name>
        <dbReference type="ChEBI" id="CHEBI:57692"/>
    </ligand>
</feature>
<feature type="binding site" evidence="2">
    <location>
        <begin position="277"/>
        <end position="286"/>
    </location>
    <ligand>
        <name>FAD</name>
        <dbReference type="ChEBI" id="CHEBI:57692"/>
    </ligand>
</feature>
<feature type="disulfide bond" description="Redox-active" evidence="2">
    <location>
        <begin position="134"/>
        <end position="137"/>
    </location>
</feature>
<proteinExistence type="inferred from homology"/>
<reference key="1">
    <citation type="journal article" date="2003" name="Mol. Microbiol.">
        <title>Genome-based analysis of virulence genes in a non-biofilm-forming Staphylococcus epidermidis strain (ATCC 12228).</title>
        <authorList>
            <person name="Zhang Y.-Q."/>
            <person name="Ren S.-X."/>
            <person name="Li H.-L."/>
            <person name="Wang Y.-X."/>
            <person name="Fu G."/>
            <person name="Yang J."/>
            <person name="Qin Z.-Q."/>
            <person name="Miao Y.-G."/>
            <person name="Wang W.-Y."/>
            <person name="Chen R.-S."/>
            <person name="Shen Y."/>
            <person name="Chen Z."/>
            <person name="Yuan Z.-H."/>
            <person name="Zhao G.-P."/>
            <person name="Qu D."/>
            <person name="Danchin A."/>
            <person name="Wen Y.-M."/>
        </authorList>
    </citation>
    <scope>NUCLEOTIDE SEQUENCE [LARGE SCALE GENOMIC DNA]</scope>
    <source>
        <strain>ATCC 12228 / FDA PCI 1200</strain>
    </source>
</reference>